<name>PHAA_CYAPA</name>
<dbReference type="EMBL" id="M11159">
    <property type="protein sequence ID" value="AAA31693.1"/>
    <property type="molecule type" value="Genomic_DNA"/>
</dbReference>
<dbReference type="EMBL" id="U30821">
    <property type="protein sequence ID" value="AAA81190.1"/>
    <property type="molecule type" value="Genomic_DNA"/>
</dbReference>
<dbReference type="EMBL" id="X02791">
    <property type="protein sequence ID" value="CAA26558.1"/>
    <property type="molecule type" value="Genomic_DNA"/>
</dbReference>
<dbReference type="PIR" id="A00326">
    <property type="entry name" value="AFKTA"/>
</dbReference>
<dbReference type="RefSeq" id="NP_043159.1">
    <property type="nucleotide sequence ID" value="NC_001675.1"/>
</dbReference>
<dbReference type="SMR" id="P00316"/>
<dbReference type="GeneID" id="801537"/>
<dbReference type="GO" id="GO:0033115">
    <property type="term" value="C:cyanelle thylakoid membrane"/>
    <property type="evidence" value="ECO:0007669"/>
    <property type="project" value="UniProtKB-SubCell"/>
</dbReference>
<dbReference type="GO" id="GO:0030089">
    <property type="term" value="C:phycobilisome"/>
    <property type="evidence" value="ECO:0007669"/>
    <property type="project" value="UniProtKB-KW"/>
</dbReference>
<dbReference type="GO" id="GO:0015979">
    <property type="term" value="P:photosynthesis"/>
    <property type="evidence" value="ECO:0007669"/>
    <property type="project" value="UniProtKB-KW"/>
</dbReference>
<dbReference type="CDD" id="cd12125">
    <property type="entry name" value="APC_alpha"/>
    <property type="match status" value="1"/>
</dbReference>
<dbReference type="Gene3D" id="1.10.490.20">
    <property type="entry name" value="Phycocyanins"/>
    <property type="match status" value="1"/>
</dbReference>
<dbReference type="InterPro" id="IPR009050">
    <property type="entry name" value="Globin-like_sf"/>
</dbReference>
<dbReference type="InterPro" id="IPR012128">
    <property type="entry name" value="Phycobilisome_asu/bsu"/>
</dbReference>
<dbReference type="InterPro" id="IPR038719">
    <property type="entry name" value="Phycobilisome_asu/bsu_sf"/>
</dbReference>
<dbReference type="PANTHER" id="PTHR34011:SF2">
    <property type="entry name" value="ALLOPHYCOCYANIN ALPHA CHAIN"/>
    <property type="match status" value="1"/>
</dbReference>
<dbReference type="PANTHER" id="PTHR34011">
    <property type="entry name" value="PHYCOBILISOME 32.1 KDA LINKER POLYPEPTIDE, PHYCOCYANIN-ASSOCIATED, ROD 2-RELATED"/>
    <property type="match status" value="1"/>
</dbReference>
<dbReference type="Pfam" id="PF00502">
    <property type="entry name" value="Phycobilisome"/>
    <property type="match status" value="1"/>
</dbReference>
<dbReference type="PIRSF" id="PIRSF000081">
    <property type="entry name" value="Phycocyanin"/>
    <property type="match status" value="1"/>
</dbReference>
<dbReference type="SUPFAM" id="SSF46458">
    <property type="entry name" value="Globin-like"/>
    <property type="match status" value="1"/>
</dbReference>
<geneLocation type="cyanelle"/>
<feature type="initiator methionine" description="Removed" evidence="1">
    <location>
        <position position="1"/>
    </location>
</feature>
<feature type="chain" id="PRO_0000199081" description="Allophycocyanin alpha chain">
    <location>
        <begin position="2"/>
        <end position="161"/>
    </location>
</feature>
<feature type="binding site" description="covalent" evidence="1">
    <location>
        <position position="81"/>
    </location>
    <ligand>
        <name>(2R,3E)-phycocyanobilin</name>
        <dbReference type="ChEBI" id="CHEBI:85275"/>
    </ligand>
</feature>
<feature type="modified residue" description="N4-methylasparagine" evidence="1">
    <location>
        <position position="71"/>
    </location>
</feature>
<proteinExistence type="inferred from homology"/>
<comment type="function">
    <text>Light-harvesting photosynthetic bile pigment-protein from the phycobiliprotein complex. Allophycocyanin has a maximum absorption at approximately 650 nanometers.</text>
</comment>
<comment type="subunit">
    <text evidence="1">Heterodimer of an alpha and a beta chain.</text>
</comment>
<comment type="subcellular location">
    <subcellularLocation>
        <location evidence="1">Plastid</location>
        <location evidence="1">Cyanelle thylakoid membrane</location>
        <topology evidence="1">Peripheral membrane protein</topology>
        <orientation evidence="1">Stromal side</orientation>
    </subcellularLocation>
    <text evidence="1">Forms the core of the phycobilisome.</text>
</comment>
<comment type="PTM">
    <text evidence="1">Contains one covalently linked phycocyanobilin chromophore.</text>
</comment>
<comment type="similarity">
    <text evidence="2">Belongs to the phycobiliprotein family.</text>
</comment>
<accession>P00316</accession>
<sequence length="161" mass="17279">MSIVTKSIVNADAEARYLSPGELDRIKSFAASGERRLRIAQILTDNRERIVREAGQQLFQKRPDIVSPGGNAYGEEMTATCLRDLDYYLRLVTYGVVAGDATPIEEIGLVGVKEMYNSLGTPVAAVAEGVRSAKSVATGLLSGDDAAEAGSYFDYVIAALQ</sequence>
<reference key="1">
    <citation type="journal article" date="1985" name="Proc. Natl. Acad. Sci. U.S.A.">
        <title>Molecular cloning and nucleotide sequence of the alpha and beta subunits of allophycocyanin from the cyanelle genome of Cyanophora paradoxa.</title>
        <authorList>
            <person name="Bryant D.A."/>
            <person name="de Lorimier R."/>
            <person name="Lambert D.H."/>
            <person name="Dubbs J.M."/>
            <person name="Stirewalt V.L."/>
            <person name="Stevens S.E. Jr."/>
            <person name="Porter R.D."/>
            <person name="Tam J."/>
            <person name="Jay E."/>
        </authorList>
    </citation>
    <scope>NUCLEOTIDE SEQUENCE [GENOMIC DNA]</scope>
</reference>
<reference key="2">
    <citation type="journal article" date="1995" name="Plant Mol. Biol. Rep.">
        <title>Nucleotide sequence of the cyanelle DNA from Cyanophora paradoxa.</title>
        <authorList>
            <person name="Stirewalt V.L."/>
            <person name="Michalowski C.B."/>
            <person name="Loeffelhardt W."/>
            <person name="Bohnert H.J."/>
            <person name="Bryant D.A."/>
        </authorList>
    </citation>
    <scope>NUCLEOTIDE SEQUENCE [LARGE SCALE GENOMIC DNA]</scope>
    <source>
        <strain>UTEX LB 555 / Pringsheim</strain>
    </source>
</reference>
<reference key="3">
    <citation type="book" date="1997" name="Eukaryotism and symbiosis">
        <title>The complete sequence of the cyanelle genome of Cyanophora paradoxa: the genetic complexity of a primitive plastid.</title>
        <editorList>
            <person name="Schenk H.E.A."/>
            <person name="Herrmann R."/>
            <person name="Jeon K.W."/>
            <person name="Mueller N.E."/>
            <person name="Schwemmler W."/>
        </editorList>
        <authorList>
            <person name="Loeffelhardt W."/>
            <person name="Stirewalt V.L."/>
            <person name="Michalowski C.B."/>
            <person name="Annarella M."/>
            <person name="Farley J.Y."/>
            <person name="Schluchter W.M."/>
            <person name="Chung S."/>
            <person name="Newmann-Spallart C."/>
            <person name="Steiner J.M."/>
            <person name="Jakowitsch J."/>
            <person name="Bohnert H.J."/>
            <person name="Bryant D.A."/>
        </authorList>
    </citation>
    <scope>NUCLEOTIDE SEQUENCE [LARGE SCALE GENOMIC DNA]</scope>
    <source>
        <strain>UTEX LB 555 / Pringsheim</strain>
    </source>
</reference>
<reference key="4">
    <citation type="journal article" date="1985" name="EMBO J.">
        <title>Major light-harvesting polypeptides encoded in polycistronic transcripts in a eukaryotic alga.</title>
        <authorList>
            <person name="Lemaux P.G."/>
            <person name="Grossman A.R."/>
        </authorList>
    </citation>
    <scope>NUCLEOTIDE SEQUENCE [GENOMIC DNA] OF 1-15</scope>
</reference>
<gene>
    <name type="primary">apcA</name>
</gene>
<keyword id="KW-0042">Antenna complex</keyword>
<keyword id="KW-0089">Bile pigment</keyword>
<keyword id="KW-0157">Chromophore</keyword>
<keyword id="KW-0194">Cyanelle</keyword>
<keyword id="KW-0249">Electron transport</keyword>
<keyword id="KW-0472">Membrane</keyword>
<keyword id="KW-0488">Methylation</keyword>
<keyword id="KW-0602">Photosynthesis</keyword>
<keyword id="KW-0605">Phycobilisome</keyword>
<keyword id="KW-0934">Plastid</keyword>
<keyword id="KW-0793">Thylakoid</keyword>
<keyword id="KW-0813">Transport</keyword>
<evidence type="ECO:0000250" key="1"/>
<evidence type="ECO:0000305" key="2"/>
<organism>
    <name type="scientific">Cyanophora paradoxa</name>
    <dbReference type="NCBI Taxonomy" id="2762"/>
    <lineage>
        <taxon>Eukaryota</taxon>
        <taxon>Glaucocystophyceae</taxon>
        <taxon>Cyanophoraceae</taxon>
        <taxon>Cyanophora</taxon>
    </lineage>
</organism>
<protein>
    <recommendedName>
        <fullName>Allophycocyanin alpha chain</fullName>
    </recommendedName>
</protein>